<evidence type="ECO:0000250" key="1"/>
<evidence type="ECO:0000256" key="2">
    <source>
        <dbReference type="SAM" id="MobiDB-lite"/>
    </source>
</evidence>
<evidence type="ECO:0000269" key="3">
    <source>
    </source>
</evidence>
<evidence type="ECO:0000269" key="4">
    <source>
    </source>
</evidence>
<evidence type="ECO:0000269" key="5">
    <source>
    </source>
</evidence>
<evidence type="ECO:0000269" key="6">
    <source>
    </source>
</evidence>
<evidence type="ECO:0000305" key="7"/>
<sequence length="942" mass="106876">MSSSSQAMLQKSDSIAEKMPDALKQSRYHMKRCFASFVGGGKKLMKREHLMNEIEKCIEDSRERSKILEGLFGYILTCTQEAAVVPPFVALAARPNPGFWEYVKVNSGDLTVDEITATDYLKLKESVFDESWSKDENALEIDFGAIDFTSPRLSLSSSIGKGADYISKFISSKLGGKSDKLEPLLNYLLRLNHHGENLMINDDLNTVAKLQKSLMLAVIVVSTYSKHTPYETFAQRLKEMGFEKGWGDTAERVKETMIILSEVLEAPDNGKLDLLFSRLPTVFNVVIFSVHGYFGQQDVLGLPDTGGQVVYILDQVRALEEELLIRINQQGLGFKPQILVVTRLIPEARGTKCDQELEAIEGTKHSHILRVPFVTNKGVLRQWVSRFDIYPYLERFTQDATSKILQRLDCKPDLIIGNYTDGNLVASLMATKLGVTQGTIAHALEKTKYEDSDAKWKELDPKYHFSCQFTADLIAMNVTDFIITSTYQEIAGSKDRPGQYESHTAFTMPGLCRVVSGIDVFDPKFNIAAPGADQSVYFPYTEKDKRFTKFHPSIQELLYNEKDNAEHMGYLADREKPIIFSMARLDTVKNITGLVEWYGKDKRLREMANLVVVAGFFDMSKSNDREEKAEIKKMHDLIEKYKLKGKFRWIAAQTDRYRNSELYRCIADTKGVFVQPALYEAFGLTVIEAMNCGLPTFATNQGGPAEIIVDGVSGFHIDPNNGDESVTKIGDFFSKCRSDGLYWDNISKGGLKRIYECYTWKIYAEKLLKMGSLYGFWRQVNEDQKKAKKRYIEMLYNLQFKQLTKKVTIPEDKPLPLRLASLRNLLPKKTTNLGAGSKQKEVTETEKTKQKSKDGQEQHDVKVGEREVREGLLAADASERVKKVLESSEEKQKLEKMKIAYGQQHSQGASPVRNLFWSVVVCLYICYILKQRFFGANSAQEY</sequence>
<comment type="function">
    <text evidence="6">Sucrose-cleaving enzyme that provides UDP-glucose and fructose for various metabolic pathways. Functions in callose synthesis at the site of phloem sieve elements.</text>
</comment>
<comment type="catalytic activity">
    <reaction>
        <text>an NDP-alpha-D-glucose + D-fructose = a ribonucleoside 5'-diphosphate + sucrose + H(+)</text>
        <dbReference type="Rhea" id="RHEA:16241"/>
        <dbReference type="ChEBI" id="CHEBI:15378"/>
        <dbReference type="ChEBI" id="CHEBI:17992"/>
        <dbReference type="ChEBI" id="CHEBI:37721"/>
        <dbReference type="ChEBI" id="CHEBI:57930"/>
        <dbReference type="ChEBI" id="CHEBI:76533"/>
        <dbReference type="EC" id="2.4.1.13"/>
    </reaction>
</comment>
<comment type="biophysicochemical properties">
    <kinetics>
        <KM evidence="4">12.44 mM for D-fructose (synthetic reaction)</KM>
        <KM evidence="4">0.06 mM for UDP-glucose (synthetic reaction)</KM>
        <KM evidence="4">31.06 mM for sucrose (degradative reaction)</KM>
        <KM evidence="4">0.26 mM for UDP (degradative reaction)</KM>
        <Vmax evidence="4">3.27 umol/min/mg enzyme for synthetic reaction</Vmax>
        <Vmax evidence="4">1.43 umol/min/mg enzyme for degradative reaction</Vmax>
    </kinetics>
    <phDependence>
        <text evidence="4">Optimum pH is 6.0-7.0 for degradative reaction (PubMed:17257168, PubMed:22184213). Optimum pH is 7.0 for synthetic reaction (PubMed:22184213). Optimum pH is 9.0-9.5 for synthetic reaction (PubMed:17257168).</text>
    </phDependence>
</comment>
<comment type="subcellular location">
    <subcellularLocation>
        <location evidence="6">Secreted</location>
        <location evidence="6">Cell wall</location>
    </subcellularLocation>
</comment>
<comment type="alternative products">
    <event type="alternative splicing"/>
    <isoform>
        <id>Q9FX32-1</id>
        <name>1</name>
        <sequence type="displayed"/>
    </isoform>
    <text>A number of isoforms are produced. According to EST sequences.</text>
</comment>
<comment type="tissue specificity">
    <text evidence="3 4 5 6">Detected in the whole plant but more precisely confined to the vasculature in cotyledons, leaves, petals, anthers and roots.</text>
</comment>
<comment type="disruption phenotype">
    <text evidence="4">No visible phenotype.</text>
</comment>
<comment type="similarity">
    <text evidence="7">Belongs to the glycosyltransferase 1 family. Plant sucrose synthase subfamily.</text>
</comment>
<accession>Q9FX32</accession>
<gene>
    <name type="primary">SUS6</name>
    <name type="ordered locus">At1g73370</name>
    <name type="ORF">T9L24.42</name>
</gene>
<dbReference type="EC" id="2.4.1.13"/>
<dbReference type="EMBL" id="AC012396">
    <property type="protein sequence ID" value="AAG30975.1"/>
    <property type="molecule type" value="Genomic_DNA"/>
</dbReference>
<dbReference type="EMBL" id="CP002684">
    <property type="protein sequence ID" value="AEE35450.1"/>
    <property type="molecule type" value="Genomic_DNA"/>
</dbReference>
<dbReference type="EMBL" id="CP002684">
    <property type="protein sequence ID" value="ANM59229.1"/>
    <property type="molecule type" value="Genomic_DNA"/>
</dbReference>
<dbReference type="PIR" id="C96760">
    <property type="entry name" value="C96760"/>
</dbReference>
<dbReference type="RefSeq" id="NP_001319374.1">
    <molecule id="Q9FX32-1"/>
    <property type="nucleotide sequence ID" value="NM_001334591.1"/>
</dbReference>
<dbReference type="RefSeq" id="NP_177480.1">
    <molecule id="Q9FX32-1"/>
    <property type="nucleotide sequence ID" value="NM_105997.2"/>
</dbReference>
<dbReference type="SMR" id="Q9FX32"/>
<dbReference type="FunCoup" id="Q9FX32">
    <property type="interactions" value="330"/>
</dbReference>
<dbReference type="STRING" id="3702.Q9FX32"/>
<dbReference type="CAZy" id="GT4">
    <property type="family name" value="Glycosyltransferase Family 4"/>
</dbReference>
<dbReference type="iPTMnet" id="Q9FX32"/>
<dbReference type="PaxDb" id="3702-AT1G73370.1"/>
<dbReference type="ProteomicsDB" id="228435">
    <molecule id="Q9FX32-1"/>
</dbReference>
<dbReference type="EnsemblPlants" id="AT1G73370.1">
    <molecule id="Q9FX32-1"/>
    <property type="protein sequence ID" value="AT1G73370.1"/>
    <property type="gene ID" value="AT1G73370"/>
</dbReference>
<dbReference type="EnsemblPlants" id="AT1G73370.3">
    <molecule id="Q9FX32-1"/>
    <property type="protein sequence ID" value="AT1G73370.3"/>
    <property type="gene ID" value="AT1G73370"/>
</dbReference>
<dbReference type="GeneID" id="843672"/>
<dbReference type="Gramene" id="AT1G73370.1">
    <molecule id="Q9FX32-1"/>
    <property type="protein sequence ID" value="AT1G73370.1"/>
    <property type="gene ID" value="AT1G73370"/>
</dbReference>
<dbReference type="Gramene" id="AT1G73370.3">
    <molecule id="Q9FX32-1"/>
    <property type="protein sequence ID" value="AT1G73370.3"/>
    <property type="gene ID" value="AT1G73370"/>
</dbReference>
<dbReference type="KEGG" id="ath:AT1G73370"/>
<dbReference type="Araport" id="AT1G73370"/>
<dbReference type="TAIR" id="AT1G73370">
    <property type="gene designation" value="SUS6"/>
</dbReference>
<dbReference type="eggNOG" id="KOG0853">
    <property type="taxonomic scope" value="Eukaryota"/>
</dbReference>
<dbReference type="InParanoid" id="Q9FX32"/>
<dbReference type="PhylomeDB" id="Q9FX32"/>
<dbReference type="BioCyc" id="MetaCyc:AT1G73370-MONOMER"/>
<dbReference type="BRENDA" id="2.4.1.13">
    <property type="organism ID" value="399"/>
</dbReference>
<dbReference type="PRO" id="PR:Q9FX32"/>
<dbReference type="Proteomes" id="UP000006548">
    <property type="component" value="Chromosome 1"/>
</dbReference>
<dbReference type="ExpressionAtlas" id="Q9FX32">
    <property type="expression patterns" value="baseline and differential"/>
</dbReference>
<dbReference type="GO" id="GO:0005576">
    <property type="term" value="C:extracellular region"/>
    <property type="evidence" value="ECO:0007669"/>
    <property type="project" value="UniProtKB-KW"/>
</dbReference>
<dbReference type="GO" id="GO:0016157">
    <property type="term" value="F:sucrose synthase activity"/>
    <property type="evidence" value="ECO:0000314"/>
    <property type="project" value="TAIR"/>
</dbReference>
<dbReference type="GO" id="GO:0080165">
    <property type="term" value="P:callose deposition in phloem sieve plate"/>
    <property type="evidence" value="ECO:0000315"/>
    <property type="project" value="TAIR"/>
</dbReference>
<dbReference type="GO" id="GO:0005985">
    <property type="term" value="P:sucrose metabolic process"/>
    <property type="evidence" value="ECO:0007669"/>
    <property type="project" value="InterPro"/>
</dbReference>
<dbReference type="FunFam" id="1.20.120.1230:FF:000001">
    <property type="entry name" value="Sucrose synthase"/>
    <property type="match status" value="1"/>
</dbReference>
<dbReference type="FunFam" id="3.10.450.330:FF:000001">
    <property type="entry name" value="Sucrose synthase"/>
    <property type="match status" value="1"/>
</dbReference>
<dbReference type="FunFam" id="3.40.50.2000:FF:000006">
    <property type="entry name" value="Sucrose synthase"/>
    <property type="match status" value="1"/>
</dbReference>
<dbReference type="Gene3D" id="1.20.120.1230">
    <property type="match status" value="1"/>
</dbReference>
<dbReference type="Gene3D" id="3.10.450.330">
    <property type="match status" value="1"/>
</dbReference>
<dbReference type="Gene3D" id="3.40.50.2000">
    <property type="entry name" value="Glycogen Phosphorylase B"/>
    <property type="match status" value="2"/>
</dbReference>
<dbReference type="InterPro" id="IPR001296">
    <property type="entry name" value="Glyco_trans_1"/>
</dbReference>
<dbReference type="InterPro" id="IPR000368">
    <property type="entry name" value="Sucrose_synth_GT-B1"/>
</dbReference>
<dbReference type="InterPro" id="IPR012820">
    <property type="entry name" value="Sucrose_synthase_pln/cyn"/>
</dbReference>
<dbReference type="InterPro" id="IPR056736">
    <property type="entry name" value="SUS_EPBD"/>
</dbReference>
<dbReference type="InterPro" id="IPR056735">
    <property type="entry name" value="SUS_N"/>
</dbReference>
<dbReference type="NCBIfam" id="TIGR02470">
    <property type="entry name" value="sucr_synth"/>
    <property type="match status" value="1"/>
</dbReference>
<dbReference type="PANTHER" id="PTHR45839">
    <property type="match status" value="1"/>
</dbReference>
<dbReference type="PANTHER" id="PTHR45839:SF24">
    <property type="entry name" value="SUCROSE SYNTHASE 6"/>
    <property type="match status" value="1"/>
</dbReference>
<dbReference type="Pfam" id="PF00534">
    <property type="entry name" value="Glycos_transf_1"/>
    <property type="match status" value="1"/>
</dbReference>
<dbReference type="Pfam" id="PF00862">
    <property type="entry name" value="GT-B_Sucrose_synth"/>
    <property type="match status" value="1"/>
</dbReference>
<dbReference type="Pfam" id="PF24862">
    <property type="entry name" value="SUS_EPBD"/>
    <property type="match status" value="1"/>
</dbReference>
<dbReference type="Pfam" id="PF24861">
    <property type="entry name" value="SUS_N"/>
    <property type="match status" value="1"/>
</dbReference>
<dbReference type="SUPFAM" id="SSF53756">
    <property type="entry name" value="UDP-Glycosyltransferase/glycogen phosphorylase"/>
    <property type="match status" value="1"/>
</dbReference>
<protein>
    <recommendedName>
        <fullName>Sucrose synthase 6</fullName>
        <shortName>AtSUS6</shortName>
        <ecNumber>2.4.1.13</ecNumber>
    </recommendedName>
    <alternativeName>
        <fullName>Sucrose-UDP glucosyltransferase 6</fullName>
    </alternativeName>
</protein>
<organism>
    <name type="scientific">Arabidopsis thaliana</name>
    <name type="common">Mouse-ear cress</name>
    <dbReference type="NCBI Taxonomy" id="3702"/>
    <lineage>
        <taxon>Eukaryota</taxon>
        <taxon>Viridiplantae</taxon>
        <taxon>Streptophyta</taxon>
        <taxon>Embryophyta</taxon>
        <taxon>Tracheophyta</taxon>
        <taxon>Spermatophyta</taxon>
        <taxon>Magnoliopsida</taxon>
        <taxon>eudicotyledons</taxon>
        <taxon>Gunneridae</taxon>
        <taxon>Pentapetalae</taxon>
        <taxon>rosids</taxon>
        <taxon>malvids</taxon>
        <taxon>Brassicales</taxon>
        <taxon>Brassicaceae</taxon>
        <taxon>Camelineae</taxon>
        <taxon>Arabidopsis</taxon>
    </lineage>
</organism>
<proteinExistence type="evidence at protein level"/>
<keyword id="KW-0025">Alternative splicing</keyword>
<keyword id="KW-0134">Cell wall</keyword>
<keyword id="KW-0328">Glycosyltransferase</keyword>
<keyword id="KW-1185">Reference proteome</keyword>
<keyword id="KW-0964">Secreted</keyword>
<keyword id="KW-0808">Transferase</keyword>
<reference key="1">
    <citation type="journal article" date="2000" name="Nature">
        <title>Sequence and analysis of chromosome 1 of the plant Arabidopsis thaliana.</title>
        <authorList>
            <person name="Theologis A."/>
            <person name="Ecker J.R."/>
            <person name="Palm C.J."/>
            <person name="Federspiel N.A."/>
            <person name="Kaul S."/>
            <person name="White O."/>
            <person name="Alonso J."/>
            <person name="Altafi H."/>
            <person name="Araujo R."/>
            <person name="Bowman C.L."/>
            <person name="Brooks S.Y."/>
            <person name="Buehler E."/>
            <person name="Chan A."/>
            <person name="Chao Q."/>
            <person name="Chen H."/>
            <person name="Cheuk R.F."/>
            <person name="Chin C.W."/>
            <person name="Chung M.K."/>
            <person name="Conn L."/>
            <person name="Conway A.B."/>
            <person name="Conway A.R."/>
            <person name="Creasy T.H."/>
            <person name="Dewar K."/>
            <person name="Dunn P."/>
            <person name="Etgu P."/>
            <person name="Feldblyum T.V."/>
            <person name="Feng J.-D."/>
            <person name="Fong B."/>
            <person name="Fujii C.Y."/>
            <person name="Gill J.E."/>
            <person name="Goldsmith A.D."/>
            <person name="Haas B."/>
            <person name="Hansen N.F."/>
            <person name="Hughes B."/>
            <person name="Huizar L."/>
            <person name="Hunter J.L."/>
            <person name="Jenkins J."/>
            <person name="Johnson-Hopson C."/>
            <person name="Khan S."/>
            <person name="Khaykin E."/>
            <person name="Kim C.J."/>
            <person name="Koo H.L."/>
            <person name="Kremenetskaia I."/>
            <person name="Kurtz D.B."/>
            <person name="Kwan A."/>
            <person name="Lam B."/>
            <person name="Langin-Hooper S."/>
            <person name="Lee A."/>
            <person name="Lee J.M."/>
            <person name="Lenz C.A."/>
            <person name="Li J.H."/>
            <person name="Li Y.-P."/>
            <person name="Lin X."/>
            <person name="Liu S.X."/>
            <person name="Liu Z.A."/>
            <person name="Luros J.S."/>
            <person name="Maiti R."/>
            <person name="Marziali A."/>
            <person name="Militscher J."/>
            <person name="Miranda M."/>
            <person name="Nguyen M."/>
            <person name="Nierman W.C."/>
            <person name="Osborne B.I."/>
            <person name="Pai G."/>
            <person name="Peterson J."/>
            <person name="Pham P.K."/>
            <person name="Rizzo M."/>
            <person name="Rooney T."/>
            <person name="Rowley D."/>
            <person name="Sakano H."/>
            <person name="Salzberg S.L."/>
            <person name="Schwartz J.R."/>
            <person name="Shinn P."/>
            <person name="Southwick A.M."/>
            <person name="Sun H."/>
            <person name="Tallon L.J."/>
            <person name="Tambunga G."/>
            <person name="Toriumi M.J."/>
            <person name="Town C.D."/>
            <person name="Utterback T."/>
            <person name="Van Aken S."/>
            <person name="Vaysberg M."/>
            <person name="Vysotskaia V.S."/>
            <person name="Walker M."/>
            <person name="Wu D."/>
            <person name="Yu G."/>
            <person name="Fraser C.M."/>
            <person name="Venter J.C."/>
            <person name="Davis R.W."/>
        </authorList>
    </citation>
    <scope>NUCLEOTIDE SEQUENCE [LARGE SCALE GENOMIC DNA]</scope>
    <source>
        <strain>cv. Columbia</strain>
    </source>
</reference>
<reference key="2">
    <citation type="journal article" date="2017" name="Plant J.">
        <title>Araport11: a complete reannotation of the Arabidopsis thaliana reference genome.</title>
        <authorList>
            <person name="Cheng C.Y."/>
            <person name="Krishnakumar V."/>
            <person name="Chan A.P."/>
            <person name="Thibaud-Nissen F."/>
            <person name="Schobel S."/>
            <person name="Town C.D."/>
        </authorList>
    </citation>
    <scope>GENOME REANNOTATION</scope>
    <source>
        <strain>cv. Columbia</strain>
    </source>
</reference>
<reference key="3">
    <citation type="journal article" date="2004" name="J. Exp. Bot.">
        <title>Structure and expression profile of the sucrose synthase multigene family in Arabidopsis.</title>
        <authorList>
            <person name="Baud S."/>
            <person name="Vaultier M.N."/>
            <person name="Rochat C."/>
        </authorList>
    </citation>
    <scope>GENE FAMILY</scope>
    <scope>TISSUE SPECIFICITY</scope>
</reference>
<reference key="4">
    <citation type="journal article" date="2007" name="Plant J.">
        <title>Analysis of the sucrose synthase gene family in Arabidopsis.</title>
        <authorList>
            <person name="Bieniawska Z."/>
            <person name="Paul Barratt D.H."/>
            <person name="Garlick A.P."/>
            <person name="Thole V."/>
            <person name="Kruger N.J."/>
            <person name="Martin C."/>
            <person name="Zrenner R."/>
            <person name="Smith A.M."/>
        </authorList>
    </citation>
    <scope>BIOPHYSICOCHEMICAL PROPERTIES</scope>
    <scope>TISSUE SPECIFICITY</scope>
    <scope>DISRUPTION PHENOTYPE</scope>
</reference>
<reference key="5">
    <citation type="journal article" date="2008" name="J. Exp. Bot.">
        <title>Localization of sucrose synthase in developing seed and siliques of Arabidopsis thaliana reveals diverse roles for SUS during development.</title>
        <authorList>
            <person name="Fallahi H."/>
            <person name="Scofield G.N."/>
            <person name="Badger M.R."/>
            <person name="Chow W.S."/>
            <person name="Furbank R.T."/>
            <person name="Ruan Y.L."/>
        </authorList>
    </citation>
    <scope>TISSUE SPECIFICITY</scope>
</reference>
<reference key="6">
    <citation type="journal article" date="2009" name="Proc. Natl. Acad. Sci. U.S.A.">
        <title>Normal growth of Arabidopsis requires cytosolic invertase but not sucrose synthase.</title>
        <authorList>
            <person name="Barratt D.H."/>
            <person name="Derbyshire P."/>
            <person name="Findlay K."/>
            <person name="Pike M."/>
            <person name="Wellner N."/>
            <person name="Lunn J."/>
            <person name="Feil R."/>
            <person name="Simpson C."/>
            <person name="Maule A.J."/>
            <person name="Smith A.M."/>
        </authorList>
    </citation>
    <scope>SUBCELLULAR LOCATION</scope>
    <scope>TISSUE SPECIFICITY</scope>
    <scope>FUNCTION</scope>
</reference>
<name>SUS6_ARATH</name>
<feature type="chain" id="PRO_0000418805" description="Sucrose synthase 6">
    <location>
        <begin position="1"/>
        <end position="942"/>
    </location>
</feature>
<feature type="region of interest" description="GT-B glycosyltransferase" evidence="1">
    <location>
        <begin position="281"/>
        <end position="759"/>
    </location>
</feature>
<feature type="region of interest" description="Disordered" evidence="2">
    <location>
        <begin position="830"/>
        <end position="862"/>
    </location>
</feature>
<feature type="compositionally biased region" description="Basic and acidic residues" evidence="2">
    <location>
        <begin position="838"/>
        <end position="862"/>
    </location>
</feature>